<reference key="1">
    <citation type="journal article" date="2005" name="Science">
        <title>The transcriptional landscape of the mammalian genome.</title>
        <authorList>
            <person name="Carninci P."/>
            <person name="Kasukawa T."/>
            <person name="Katayama S."/>
            <person name="Gough J."/>
            <person name="Frith M.C."/>
            <person name="Maeda N."/>
            <person name="Oyama R."/>
            <person name="Ravasi T."/>
            <person name="Lenhard B."/>
            <person name="Wells C."/>
            <person name="Kodzius R."/>
            <person name="Shimokawa K."/>
            <person name="Bajic V.B."/>
            <person name="Brenner S.E."/>
            <person name="Batalov S."/>
            <person name="Forrest A.R."/>
            <person name="Zavolan M."/>
            <person name="Davis M.J."/>
            <person name="Wilming L.G."/>
            <person name="Aidinis V."/>
            <person name="Allen J.E."/>
            <person name="Ambesi-Impiombato A."/>
            <person name="Apweiler R."/>
            <person name="Aturaliya R.N."/>
            <person name="Bailey T.L."/>
            <person name="Bansal M."/>
            <person name="Baxter L."/>
            <person name="Beisel K.W."/>
            <person name="Bersano T."/>
            <person name="Bono H."/>
            <person name="Chalk A.M."/>
            <person name="Chiu K.P."/>
            <person name="Choudhary V."/>
            <person name="Christoffels A."/>
            <person name="Clutterbuck D.R."/>
            <person name="Crowe M.L."/>
            <person name="Dalla E."/>
            <person name="Dalrymple B.P."/>
            <person name="de Bono B."/>
            <person name="Della Gatta G."/>
            <person name="di Bernardo D."/>
            <person name="Down T."/>
            <person name="Engstrom P."/>
            <person name="Fagiolini M."/>
            <person name="Faulkner G."/>
            <person name="Fletcher C.F."/>
            <person name="Fukushima T."/>
            <person name="Furuno M."/>
            <person name="Futaki S."/>
            <person name="Gariboldi M."/>
            <person name="Georgii-Hemming P."/>
            <person name="Gingeras T.R."/>
            <person name="Gojobori T."/>
            <person name="Green R.E."/>
            <person name="Gustincich S."/>
            <person name="Harbers M."/>
            <person name="Hayashi Y."/>
            <person name="Hensch T.K."/>
            <person name="Hirokawa N."/>
            <person name="Hill D."/>
            <person name="Huminiecki L."/>
            <person name="Iacono M."/>
            <person name="Ikeo K."/>
            <person name="Iwama A."/>
            <person name="Ishikawa T."/>
            <person name="Jakt M."/>
            <person name="Kanapin A."/>
            <person name="Katoh M."/>
            <person name="Kawasawa Y."/>
            <person name="Kelso J."/>
            <person name="Kitamura H."/>
            <person name="Kitano H."/>
            <person name="Kollias G."/>
            <person name="Krishnan S.P."/>
            <person name="Kruger A."/>
            <person name="Kummerfeld S.K."/>
            <person name="Kurochkin I.V."/>
            <person name="Lareau L.F."/>
            <person name="Lazarevic D."/>
            <person name="Lipovich L."/>
            <person name="Liu J."/>
            <person name="Liuni S."/>
            <person name="McWilliam S."/>
            <person name="Madan Babu M."/>
            <person name="Madera M."/>
            <person name="Marchionni L."/>
            <person name="Matsuda H."/>
            <person name="Matsuzawa S."/>
            <person name="Miki H."/>
            <person name="Mignone F."/>
            <person name="Miyake S."/>
            <person name="Morris K."/>
            <person name="Mottagui-Tabar S."/>
            <person name="Mulder N."/>
            <person name="Nakano N."/>
            <person name="Nakauchi H."/>
            <person name="Ng P."/>
            <person name="Nilsson R."/>
            <person name="Nishiguchi S."/>
            <person name="Nishikawa S."/>
            <person name="Nori F."/>
            <person name="Ohara O."/>
            <person name="Okazaki Y."/>
            <person name="Orlando V."/>
            <person name="Pang K.C."/>
            <person name="Pavan W.J."/>
            <person name="Pavesi G."/>
            <person name="Pesole G."/>
            <person name="Petrovsky N."/>
            <person name="Piazza S."/>
            <person name="Reed J."/>
            <person name="Reid J.F."/>
            <person name="Ring B.Z."/>
            <person name="Ringwald M."/>
            <person name="Rost B."/>
            <person name="Ruan Y."/>
            <person name="Salzberg S.L."/>
            <person name="Sandelin A."/>
            <person name="Schneider C."/>
            <person name="Schoenbach C."/>
            <person name="Sekiguchi K."/>
            <person name="Semple C.A."/>
            <person name="Seno S."/>
            <person name="Sessa L."/>
            <person name="Sheng Y."/>
            <person name="Shibata Y."/>
            <person name="Shimada H."/>
            <person name="Shimada K."/>
            <person name="Silva D."/>
            <person name="Sinclair B."/>
            <person name="Sperling S."/>
            <person name="Stupka E."/>
            <person name="Sugiura K."/>
            <person name="Sultana R."/>
            <person name="Takenaka Y."/>
            <person name="Taki K."/>
            <person name="Tammoja K."/>
            <person name="Tan S.L."/>
            <person name="Tang S."/>
            <person name="Taylor M.S."/>
            <person name="Tegner J."/>
            <person name="Teichmann S.A."/>
            <person name="Ueda H.R."/>
            <person name="van Nimwegen E."/>
            <person name="Verardo R."/>
            <person name="Wei C.L."/>
            <person name="Yagi K."/>
            <person name="Yamanishi H."/>
            <person name="Zabarovsky E."/>
            <person name="Zhu S."/>
            <person name="Zimmer A."/>
            <person name="Hide W."/>
            <person name="Bult C."/>
            <person name="Grimmond S.M."/>
            <person name="Teasdale R.D."/>
            <person name="Liu E.T."/>
            <person name="Brusic V."/>
            <person name="Quackenbush J."/>
            <person name="Wahlestedt C."/>
            <person name="Mattick J.S."/>
            <person name="Hume D.A."/>
            <person name="Kai C."/>
            <person name="Sasaki D."/>
            <person name="Tomaru Y."/>
            <person name="Fukuda S."/>
            <person name="Kanamori-Katayama M."/>
            <person name="Suzuki M."/>
            <person name="Aoki J."/>
            <person name="Arakawa T."/>
            <person name="Iida J."/>
            <person name="Imamura K."/>
            <person name="Itoh M."/>
            <person name="Kato T."/>
            <person name="Kawaji H."/>
            <person name="Kawagashira N."/>
            <person name="Kawashima T."/>
            <person name="Kojima M."/>
            <person name="Kondo S."/>
            <person name="Konno H."/>
            <person name="Nakano K."/>
            <person name="Ninomiya N."/>
            <person name="Nishio T."/>
            <person name="Okada M."/>
            <person name="Plessy C."/>
            <person name="Shibata K."/>
            <person name="Shiraki T."/>
            <person name="Suzuki S."/>
            <person name="Tagami M."/>
            <person name="Waki K."/>
            <person name="Watahiki A."/>
            <person name="Okamura-Oho Y."/>
            <person name="Suzuki H."/>
            <person name="Kawai J."/>
            <person name="Hayashizaki Y."/>
        </authorList>
    </citation>
    <scope>NUCLEOTIDE SEQUENCE [LARGE SCALE MRNA]</scope>
    <source>
        <strain>C57BL/6J</strain>
        <tissue>Aorta</tissue>
        <tissue>Cerebellum</tissue>
        <tissue>Vein</tissue>
    </source>
</reference>
<reference key="2">
    <citation type="journal article" date="2004" name="Genome Res.">
        <title>The status, quality, and expansion of the NIH full-length cDNA project: the Mammalian Gene Collection (MGC).</title>
        <authorList>
            <consortium name="The MGC Project Team"/>
        </authorList>
    </citation>
    <scope>NUCLEOTIDE SEQUENCE [LARGE SCALE MRNA]</scope>
    <source>
        <tissue>Kidney</tissue>
    </source>
</reference>
<reference key="3">
    <citation type="journal article" date="1996" name="J. Biol. Chem.">
        <title>The MutT proteins or 'Nudix' hydrolases, a family of versatile, widely distributed, 'housecleaning' enzymes.</title>
        <authorList>
            <person name="Bessman M.J."/>
            <person name="Frick D.N."/>
            <person name="O'Handley S.F."/>
        </authorList>
    </citation>
    <scope>NOMENCLATURE</scope>
</reference>
<reference key="4">
    <citation type="journal article" date="2003" name="Biochem. Biophys. Res. Commun.">
        <title>Mouse MTH2 protein which prevents mutations caused by 8-oxoguanine nucleotides.</title>
        <authorList>
            <person name="Cai J.-P."/>
            <person name="Ishibashi T."/>
            <person name="Takagi Y."/>
            <person name="Hayakawa H."/>
            <person name="Sekiguchi M."/>
        </authorList>
    </citation>
    <scope>FUNCTION</scope>
    <scope>CATALYTIC ACTIVITY</scope>
    <scope>COFACTOR</scope>
    <scope>BIOPHYSICOCHEMICAL PROPERTIES</scope>
</reference>
<reference key="5">
    <citation type="journal article" date="2009" name="J. Neurol. Sci.">
        <title>Age-related alterations in the expression of MTH2 in the hippocampus of the SAMP8 mouse with learning and memory deterioration.</title>
        <authorList>
            <person name="Zheng J.-D."/>
            <person name="Hei A.-L."/>
            <person name="Zuo P.-P."/>
            <person name="Dong Y.-L."/>
            <person name="Song X.-N."/>
            <person name="Takagi Y."/>
            <person name="Sekiguchi M."/>
            <person name="Cai J.-P."/>
        </authorList>
    </citation>
    <scope>INDUCTION</scope>
</reference>
<reference key="6">
    <citation type="journal article" date="2020" name="Nucleic Acids Res.">
        <title>Mammalian Nudix proteins cleave nucleotide metabolite caps on RNAs.</title>
        <authorList>
            <person name="Sharma S."/>
            <person name="Grudzien-Nogalska E."/>
            <person name="Hamilton K."/>
            <person name="Jiao X."/>
            <person name="Yang J."/>
            <person name="Tong L."/>
            <person name="Kiledjian M."/>
        </authorList>
    </citation>
    <scope>FUNCTION</scope>
    <scope>CATALYTIC ACTIVITY</scope>
</reference>
<comment type="function">
    <text evidence="2 4 6">May catalyze the hydrolysis of nucleoside triphosphates including dGTP, dTTP, dCTP, their oxidized forms like 8-oxo-dGTP and the prodrug thiopurine derivatives 6-thio-dGTP and 6-thio-GTP (PubMed:12767940). Could also catalyze the hydrolysis of some nucleoside diphosphate derivatives (By similarity). Hydrolyzes oxidized nucleosides triphosphates like 8-oxo-dGTP in vitro, but the specificity and efficiency towards these substrates are low. Therefore, the potential in vivo sanitizing role of this enzyme, that would consist in removing oxidatively damaged forms of nucleosides to prevent their incorporation into DNA, is unclear (PubMed:12767940). Through the hydrolysis of thioguanosine triphosphates may participate in the catabolism of thiopurine drugs (By similarity). May also have a role in DNA synthesis and cell cycle progression by stabilizing PCNA (By similarity). Exhibits decapping activity towards dpCoA-capped RNAs in vitro (PubMed:32432673).</text>
</comment>
<comment type="catalytic activity">
    <reaction evidence="4">
        <text>a ribonucleoside 5'-triphosphate + H2O = a ribonucleoside 5'-phosphate + diphosphate + H(+)</text>
        <dbReference type="Rhea" id="RHEA:23996"/>
        <dbReference type="ChEBI" id="CHEBI:15377"/>
        <dbReference type="ChEBI" id="CHEBI:15378"/>
        <dbReference type="ChEBI" id="CHEBI:33019"/>
        <dbReference type="ChEBI" id="CHEBI:58043"/>
        <dbReference type="ChEBI" id="CHEBI:61557"/>
        <dbReference type="EC" id="3.6.1.9"/>
    </reaction>
</comment>
<comment type="catalytic activity">
    <reaction evidence="4">
        <text>a 2'-deoxyribonucleoside 5'-triphosphate + H2O = a 2'-deoxyribonucleoside 5'-phosphate + diphosphate + H(+)</text>
        <dbReference type="Rhea" id="RHEA:44644"/>
        <dbReference type="ChEBI" id="CHEBI:15377"/>
        <dbReference type="ChEBI" id="CHEBI:15378"/>
        <dbReference type="ChEBI" id="CHEBI:33019"/>
        <dbReference type="ChEBI" id="CHEBI:61560"/>
        <dbReference type="ChEBI" id="CHEBI:65317"/>
        <dbReference type="EC" id="3.6.1.9"/>
    </reaction>
</comment>
<comment type="catalytic activity">
    <reaction evidence="10">
        <text>a 5'-end CoA-ribonucleoside in mRNA + H2O = a 5'-end phospho-adenosine-phospho-ribonucleoside in mRNA + (R)-4'-phosphopantetheine + 2 H(+)</text>
        <dbReference type="Rhea" id="RHEA:67592"/>
        <dbReference type="Rhea" id="RHEA-COMP:15719"/>
        <dbReference type="Rhea" id="RHEA-COMP:17276"/>
        <dbReference type="ChEBI" id="CHEBI:15377"/>
        <dbReference type="ChEBI" id="CHEBI:15378"/>
        <dbReference type="ChEBI" id="CHEBI:61723"/>
        <dbReference type="ChEBI" id="CHEBI:144051"/>
        <dbReference type="ChEBI" id="CHEBI:172371"/>
    </reaction>
    <physiologicalReaction direction="left-to-right" evidence="10">
        <dbReference type="Rhea" id="RHEA:67593"/>
    </physiologicalReaction>
</comment>
<comment type="cofactor">
    <cofactor evidence="4">
        <name>Mg(2+)</name>
        <dbReference type="ChEBI" id="CHEBI:18420"/>
    </cofactor>
    <cofactor evidence="4">
        <name>Mn(2+)</name>
        <dbReference type="ChEBI" id="CHEBI:29035"/>
    </cofactor>
    <text evidence="4">Magnesium may be the real cofactor in vivo.</text>
</comment>
<comment type="biophysicochemical properties">
    <kinetics>
        <KM evidence="4">32 uM for 8-oxo-dGTP</KM>
        <KM evidence="4">75 uM for dGTP</KM>
    </kinetics>
</comment>
<comment type="subunit">
    <text evidence="2">Homodimer. Interacts with PCNA; interaction is disrupted in response to UV irradiation.</text>
</comment>
<comment type="induction">
    <text evidence="5">Progressive reduction of protein levels after 4 month of age in the hippocampus of SAMP8 mouse, a mouse with early aging syndrome and reduced ability of learning and memory.</text>
</comment>
<comment type="miscellaneous">
    <text>Has the ability to complement a mutation of mutT in E.coli and thereby completely suppress the increased frequency of spontaneous mutations.</text>
</comment>
<comment type="similarity">
    <text evidence="9">Belongs to the Nudix hydrolase family.</text>
</comment>
<name>NUD15_MOUSE</name>
<proteinExistence type="evidence at protein level"/>
<protein>
    <recommendedName>
        <fullName evidence="9">Nucleotide triphosphate diphosphatase NUDT15</fullName>
        <ecNumber evidence="4">3.6.1.9</ecNumber>
    </recommendedName>
    <alternativeName>
        <fullName evidence="7">MutT homolog 2</fullName>
        <shortName evidence="7">mMTH2</shortName>
    </alternativeName>
    <alternativeName>
        <fullName evidence="9">Nucleoside diphosphate-linked moiety X motif 15</fullName>
        <shortName evidence="9">Nudix motif 15</shortName>
    </alternativeName>
    <alternativeName>
        <fullName evidence="8">Nucleoside diphosphate-linked to another moiety X hydrolase 15</fullName>
        <shortName evidence="2">Nudix hydrolase 15</shortName>
    </alternativeName>
</protein>
<organism>
    <name type="scientific">Mus musculus</name>
    <name type="common">Mouse</name>
    <dbReference type="NCBI Taxonomy" id="10090"/>
    <lineage>
        <taxon>Eukaryota</taxon>
        <taxon>Metazoa</taxon>
        <taxon>Chordata</taxon>
        <taxon>Craniata</taxon>
        <taxon>Vertebrata</taxon>
        <taxon>Euteleostomi</taxon>
        <taxon>Mammalia</taxon>
        <taxon>Eutheria</taxon>
        <taxon>Euarchontoglires</taxon>
        <taxon>Glires</taxon>
        <taxon>Rodentia</taxon>
        <taxon>Myomorpha</taxon>
        <taxon>Muroidea</taxon>
        <taxon>Muridae</taxon>
        <taxon>Murinae</taxon>
        <taxon>Mus</taxon>
        <taxon>Mus</taxon>
    </lineage>
</organism>
<gene>
    <name evidence="11" type="primary">Nudt15</name>
    <name evidence="7" type="synonym">Mth2</name>
</gene>
<accession>Q8BG93</accession>
<sequence>MAANAEPRRRPGVGVGVVVLSCEHPRCVLLGKRKGSFGAGSFQLPGGHLEFGETWEECAQRETWEEAGLHLKNVCFASVVNSFVEKENYHYVTILMKGEVDMTHDSEPRNMEPEKNESWEWVPWEEFPPLDQLFWALRCLKEQGYDPFKEDLNHLEGYRGEHLERTTKTP</sequence>
<feature type="chain" id="PRO_0000057116" description="Nucleotide triphosphate diphosphatase NUDT15">
    <location>
        <begin position="1"/>
        <end position="170"/>
    </location>
</feature>
<feature type="domain" description="Nudix hydrolase" evidence="3">
    <location>
        <begin position="8"/>
        <end position="144"/>
    </location>
</feature>
<feature type="region of interest" description="Interaction with PCNA" evidence="1">
    <location>
        <begin position="75"/>
        <end position="163"/>
    </location>
</feature>
<feature type="short sequence motif" description="Nudix box">
    <location>
        <begin position="47"/>
        <end position="68"/>
    </location>
</feature>
<feature type="binding site" evidence="1">
    <location>
        <position position="62"/>
    </location>
    <ligand>
        <name>Mg(2+)</name>
        <dbReference type="ChEBI" id="CHEBI:18420"/>
    </ligand>
</feature>
<feature type="binding site" evidence="1">
    <location>
        <position position="66"/>
    </location>
    <ligand>
        <name>Mg(2+)</name>
        <dbReference type="ChEBI" id="CHEBI:18420"/>
    </ligand>
</feature>
<keyword id="KW-0378">Hydrolase</keyword>
<keyword id="KW-0460">Magnesium</keyword>
<keyword id="KW-0464">Manganese</keyword>
<keyword id="KW-0479">Metal-binding</keyword>
<keyword id="KW-1185">Reference proteome</keyword>
<dbReference type="EC" id="3.6.1.9" evidence="4"/>
<dbReference type="EMBL" id="AK032657">
    <property type="protein sequence ID" value="BAC27973.1"/>
    <property type="molecule type" value="mRNA"/>
</dbReference>
<dbReference type="EMBL" id="AK040749">
    <property type="protein sequence ID" value="BAC30692.1"/>
    <property type="molecule type" value="mRNA"/>
</dbReference>
<dbReference type="EMBL" id="BC060962">
    <property type="protein sequence ID" value="AAH60962.1"/>
    <property type="molecule type" value="mRNA"/>
</dbReference>
<dbReference type="CCDS" id="CCDS27270.1"/>
<dbReference type="RefSeq" id="NP_001347413.1">
    <property type="nucleotide sequence ID" value="NM_001360484.1"/>
</dbReference>
<dbReference type="RefSeq" id="NP_766115.1">
    <property type="nucleotide sequence ID" value="NM_172527.3"/>
</dbReference>
<dbReference type="RefSeq" id="XP_017171430.1">
    <property type="nucleotide sequence ID" value="XM_017315941.1"/>
</dbReference>
<dbReference type="SMR" id="Q8BG93"/>
<dbReference type="FunCoup" id="Q8BG93">
    <property type="interactions" value="235"/>
</dbReference>
<dbReference type="STRING" id="10090.ENSMUSP00000039537"/>
<dbReference type="iPTMnet" id="Q8BG93"/>
<dbReference type="PhosphoSitePlus" id="Q8BG93"/>
<dbReference type="SwissPalm" id="Q8BG93"/>
<dbReference type="PaxDb" id="10090-ENSMUSP00000039537"/>
<dbReference type="ProteomicsDB" id="287847"/>
<dbReference type="Pumba" id="Q8BG93"/>
<dbReference type="Antibodypedia" id="49562">
    <property type="antibodies" value="159 antibodies from 22 providers"/>
</dbReference>
<dbReference type="DNASU" id="214254"/>
<dbReference type="Ensembl" id="ENSMUST00000043813.3">
    <property type="protein sequence ID" value="ENSMUSP00000039537.2"/>
    <property type="gene ID" value="ENSMUSG00000033405.5"/>
</dbReference>
<dbReference type="GeneID" id="214254"/>
<dbReference type="KEGG" id="mmu:214254"/>
<dbReference type="UCSC" id="uc007upv.1">
    <property type="organism name" value="mouse"/>
</dbReference>
<dbReference type="AGR" id="MGI:2443366"/>
<dbReference type="CTD" id="55270"/>
<dbReference type="MGI" id="MGI:2443366">
    <property type="gene designation" value="Nudt15"/>
</dbReference>
<dbReference type="VEuPathDB" id="HostDB:ENSMUSG00000033405"/>
<dbReference type="eggNOG" id="ENOG502RXHF">
    <property type="taxonomic scope" value="Eukaryota"/>
</dbReference>
<dbReference type="GeneTree" id="ENSGT00390000003338"/>
<dbReference type="HOGENOM" id="CLU_037162_9_2_1"/>
<dbReference type="InParanoid" id="Q8BG93"/>
<dbReference type="OMA" id="HFEASRN"/>
<dbReference type="OrthoDB" id="447842at2759"/>
<dbReference type="PhylomeDB" id="Q8BG93"/>
<dbReference type="TreeFam" id="TF106353"/>
<dbReference type="BRENDA" id="3.6.1.56">
    <property type="organism ID" value="3474"/>
</dbReference>
<dbReference type="Reactome" id="R-MMU-2393930">
    <property type="pathway name" value="Phosphate bond hydrolysis by NUDT proteins"/>
</dbReference>
<dbReference type="Reactome" id="R-MMU-9748787">
    <property type="pathway name" value="Azathioprine ADME"/>
</dbReference>
<dbReference type="SABIO-RK" id="Q8BG93"/>
<dbReference type="BioGRID-ORCS" id="214254">
    <property type="hits" value="2 hits in 77 CRISPR screens"/>
</dbReference>
<dbReference type="PRO" id="PR:Q8BG93"/>
<dbReference type="Proteomes" id="UP000000589">
    <property type="component" value="Chromosome 14"/>
</dbReference>
<dbReference type="RNAct" id="Q8BG93">
    <property type="molecule type" value="protein"/>
</dbReference>
<dbReference type="Bgee" id="ENSMUSG00000033405">
    <property type="expression patterns" value="Expressed in spermatocyte and 131 other cell types or tissues"/>
</dbReference>
<dbReference type="GO" id="GO:0035539">
    <property type="term" value="F:8-oxo-7,8-dihydrodeoxyguanosine triphosphate pyrophosphatase activity"/>
    <property type="evidence" value="ECO:0000250"/>
    <property type="project" value="UniProtKB"/>
</dbReference>
<dbReference type="GO" id="GO:0008413">
    <property type="term" value="F:8-oxo-7,8-dihydroguanosine triphosphate pyrophosphatase activity"/>
    <property type="evidence" value="ECO:0000314"/>
    <property type="project" value="MGI"/>
</dbReference>
<dbReference type="GO" id="GO:0046872">
    <property type="term" value="F:metal ion binding"/>
    <property type="evidence" value="ECO:0007669"/>
    <property type="project" value="UniProtKB-KW"/>
</dbReference>
<dbReference type="GO" id="GO:0006203">
    <property type="term" value="P:dGTP catabolic process"/>
    <property type="evidence" value="ECO:0000250"/>
    <property type="project" value="UniProtKB"/>
</dbReference>
<dbReference type="GO" id="GO:0042262">
    <property type="term" value="P:DNA protection"/>
    <property type="evidence" value="ECO:0007669"/>
    <property type="project" value="Ensembl"/>
</dbReference>
<dbReference type="GO" id="GO:0000278">
    <property type="term" value="P:mitotic cell cycle"/>
    <property type="evidence" value="ECO:0000250"/>
    <property type="project" value="UniProtKB"/>
</dbReference>
<dbReference type="GO" id="GO:0009217">
    <property type="term" value="P:purine deoxyribonucleoside triphosphate catabolic process"/>
    <property type="evidence" value="ECO:0000314"/>
    <property type="project" value="MGI"/>
</dbReference>
<dbReference type="GO" id="GO:0006195">
    <property type="term" value="P:purine nucleotide catabolic process"/>
    <property type="evidence" value="ECO:0000250"/>
    <property type="project" value="UniProtKB"/>
</dbReference>
<dbReference type="GO" id="GO:0061136">
    <property type="term" value="P:regulation of proteasomal protein catabolic process"/>
    <property type="evidence" value="ECO:0000250"/>
    <property type="project" value="UniProtKB"/>
</dbReference>
<dbReference type="GO" id="GO:0000302">
    <property type="term" value="P:response to reactive oxygen species"/>
    <property type="evidence" value="ECO:0000314"/>
    <property type="project" value="MGI"/>
</dbReference>
<dbReference type="GO" id="GO:0042178">
    <property type="term" value="P:xenobiotic catabolic process"/>
    <property type="evidence" value="ECO:0000250"/>
    <property type="project" value="UniProtKB"/>
</dbReference>
<dbReference type="CDD" id="cd04678">
    <property type="entry name" value="NUDIX_MTH2_Nudt15"/>
    <property type="match status" value="1"/>
</dbReference>
<dbReference type="FunFam" id="3.90.79.10:FF:000034">
    <property type="entry name" value="Nucleotide triphosphate diphosphatase NUDT15"/>
    <property type="match status" value="1"/>
</dbReference>
<dbReference type="Gene3D" id="3.90.79.10">
    <property type="entry name" value="Nucleoside Triphosphate Pyrophosphohydrolase"/>
    <property type="match status" value="1"/>
</dbReference>
<dbReference type="InterPro" id="IPR020476">
    <property type="entry name" value="Nudix_hydrolase"/>
</dbReference>
<dbReference type="InterPro" id="IPR015797">
    <property type="entry name" value="NUDIX_hydrolase-like_dom_sf"/>
</dbReference>
<dbReference type="InterPro" id="IPR020084">
    <property type="entry name" value="NUDIX_hydrolase_CS"/>
</dbReference>
<dbReference type="InterPro" id="IPR000086">
    <property type="entry name" value="NUDIX_hydrolase_dom"/>
</dbReference>
<dbReference type="PANTHER" id="PTHR16099">
    <property type="entry name" value="8-OXO-DGTP DIPHOSPHATES NUDT15"/>
    <property type="match status" value="1"/>
</dbReference>
<dbReference type="PANTHER" id="PTHR16099:SF5">
    <property type="entry name" value="NUCLEOTIDE TRIPHOSPHATE DIPHOSPHATASE NUDT15"/>
    <property type="match status" value="1"/>
</dbReference>
<dbReference type="Pfam" id="PF00293">
    <property type="entry name" value="NUDIX"/>
    <property type="match status" value="1"/>
</dbReference>
<dbReference type="PRINTS" id="PR00502">
    <property type="entry name" value="NUDIXFAMILY"/>
</dbReference>
<dbReference type="SUPFAM" id="SSF55811">
    <property type="entry name" value="Nudix"/>
    <property type="match status" value="1"/>
</dbReference>
<dbReference type="PROSITE" id="PS51462">
    <property type="entry name" value="NUDIX"/>
    <property type="match status" value="1"/>
</dbReference>
<dbReference type="PROSITE" id="PS00893">
    <property type="entry name" value="NUDIX_BOX"/>
    <property type="match status" value="1"/>
</dbReference>
<evidence type="ECO:0000250" key="1"/>
<evidence type="ECO:0000250" key="2">
    <source>
        <dbReference type="UniProtKB" id="Q9NV35"/>
    </source>
</evidence>
<evidence type="ECO:0000255" key="3">
    <source>
        <dbReference type="PROSITE-ProRule" id="PRU00794"/>
    </source>
</evidence>
<evidence type="ECO:0000269" key="4">
    <source>
    </source>
</evidence>
<evidence type="ECO:0000269" key="5">
    <source>
    </source>
</evidence>
<evidence type="ECO:0000269" key="6">
    <source>
    </source>
</evidence>
<evidence type="ECO:0000303" key="7">
    <source>
    </source>
</evidence>
<evidence type="ECO:0000303" key="8">
    <source>
    </source>
</evidence>
<evidence type="ECO:0000305" key="9"/>
<evidence type="ECO:0000305" key="10">
    <source>
    </source>
</evidence>
<evidence type="ECO:0000312" key="11">
    <source>
        <dbReference type="MGI" id="MGI:2443366"/>
    </source>
</evidence>